<protein>
    <recommendedName>
        <fullName evidence="1">Glutaminase</fullName>
        <ecNumber evidence="1">3.5.1.2</ecNumber>
    </recommendedName>
</protein>
<gene>
    <name evidence="1" type="primary">glsA</name>
    <name type="ordered locus">BT_2571</name>
</gene>
<accession>Q8A4M8</accession>
<comment type="catalytic activity">
    <reaction evidence="1">
        <text>L-glutamine + H2O = L-glutamate + NH4(+)</text>
        <dbReference type="Rhea" id="RHEA:15889"/>
        <dbReference type="ChEBI" id="CHEBI:15377"/>
        <dbReference type="ChEBI" id="CHEBI:28938"/>
        <dbReference type="ChEBI" id="CHEBI:29985"/>
        <dbReference type="ChEBI" id="CHEBI:58359"/>
        <dbReference type="EC" id="3.5.1.2"/>
    </reaction>
</comment>
<comment type="subunit">
    <text evidence="1">Homotetramer.</text>
</comment>
<comment type="similarity">
    <text evidence="1">Belongs to the glutaminase family.</text>
</comment>
<evidence type="ECO:0000255" key="1">
    <source>
        <dbReference type="HAMAP-Rule" id="MF_00313"/>
    </source>
</evidence>
<proteinExistence type="inferred from homology"/>
<dbReference type="EC" id="3.5.1.2" evidence="1"/>
<dbReference type="EMBL" id="AE015928">
    <property type="protein sequence ID" value="AAO77678.1"/>
    <property type="molecule type" value="Genomic_DNA"/>
</dbReference>
<dbReference type="RefSeq" id="NP_811484.1">
    <property type="nucleotide sequence ID" value="NC_004663.1"/>
</dbReference>
<dbReference type="RefSeq" id="WP_008765205.1">
    <property type="nucleotide sequence ID" value="NC_004663.1"/>
</dbReference>
<dbReference type="SMR" id="Q8A4M8"/>
<dbReference type="FunCoup" id="Q8A4M8">
    <property type="interactions" value="145"/>
</dbReference>
<dbReference type="STRING" id="226186.BT_2571"/>
<dbReference type="PaxDb" id="226186-BT_2571"/>
<dbReference type="EnsemblBacteria" id="AAO77678">
    <property type="protein sequence ID" value="AAO77678"/>
    <property type="gene ID" value="BT_2571"/>
</dbReference>
<dbReference type="GeneID" id="60923743"/>
<dbReference type="KEGG" id="bth:BT_2571"/>
<dbReference type="PATRIC" id="fig|226186.12.peg.2623"/>
<dbReference type="eggNOG" id="COG2066">
    <property type="taxonomic scope" value="Bacteria"/>
</dbReference>
<dbReference type="HOGENOM" id="CLU_027932_1_0_10"/>
<dbReference type="InParanoid" id="Q8A4M8"/>
<dbReference type="OrthoDB" id="9788822at2"/>
<dbReference type="Proteomes" id="UP000001414">
    <property type="component" value="Chromosome"/>
</dbReference>
<dbReference type="GO" id="GO:0004359">
    <property type="term" value="F:glutaminase activity"/>
    <property type="evidence" value="ECO:0000318"/>
    <property type="project" value="GO_Central"/>
</dbReference>
<dbReference type="GO" id="GO:0006537">
    <property type="term" value="P:glutamate biosynthetic process"/>
    <property type="evidence" value="ECO:0000318"/>
    <property type="project" value="GO_Central"/>
</dbReference>
<dbReference type="GO" id="GO:0006543">
    <property type="term" value="P:glutamine catabolic process"/>
    <property type="evidence" value="ECO:0000318"/>
    <property type="project" value="GO_Central"/>
</dbReference>
<dbReference type="FunFam" id="3.40.710.10:FF:000045">
    <property type="entry name" value="Glutaminase"/>
    <property type="match status" value="1"/>
</dbReference>
<dbReference type="Gene3D" id="3.40.710.10">
    <property type="entry name" value="DD-peptidase/beta-lactamase superfamily"/>
    <property type="match status" value="1"/>
</dbReference>
<dbReference type="HAMAP" id="MF_00313">
    <property type="entry name" value="Glutaminase"/>
    <property type="match status" value="1"/>
</dbReference>
<dbReference type="InterPro" id="IPR012338">
    <property type="entry name" value="Beta-lactam/transpept-like"/>
</dbReference>
<dbReference type="InterPro" id="IPR015868">
    <property type="entry name" value="Glutaminase"/>
</dbReference>
<dbReference type="NCBIfam" id="TIGR03814">
    <property type="entry name" value="Gln_ase"/>
    <property type="match status" value="1"/>
</dbReference>
<dbReference type="NCBIfam" id="NF009020">
    <property type="entry name" value="PRK12356.1"/>
    <property type="match status" value="1"/>
</dbReference>
<dbReference type="PANTHER" id="PTHR12544">
    <property type="entry name" value="GLUTAMINASE"/>
    <property type="match status" value="1"/>
</dbReference>
<dbReference type="PANTHER" id="PTHR12544:SF48">
    <property type="entry name" value="GLUTAMINASE 1"/>
    <property type="match status" value="1"/>
</dbReference>
<dbReference type="Pfam" id="PF04960">
    <property type="entry name" value="Glutaminase"/>
    <property type="match status" value="1"/>
</dbReference>
<dbReference type="SUPFAM" id="SSF56601">
    <property type="entry name" value="beta-lactamase/transpeptidase-like"/>
    <property type="match status" value="1"/>
</dbReference>
<sequence>MDKKVTLAQLKEVVQEAYDQVKTNTGGKNADYIPYLANVNKDLFGISVCLLNGQTIHVGDTDYRFGIESVSKVHTAILALRQYGAKEILDKIGADATGLPFNSIIAILLENDHPSTPLVNAGAISACSMVQPIGDSAKKWDAIVENVTDLCGSAPQLIDELYKSESDTNFNNRSIAWLLKNYNRIYDDPDMALDLYTRQCSLGVTALQLSVAAGTIANGGVNPVTKKEVFDASLAPKITAMIAAVGFYEHTGDWMYTSGIPAKTGVGGGVMGVLPGQFGIAAFAPPLDGAGNSVKAQLAIQYVMNKLGLNVFSDNHLIVVD</sequence>
<organism>
    <name type="scientific">Bacteroides thetaiotaomicron (strain ATCC 29148 / DSM 2079 / JCM 5827 / CCUG 10774 / NCTC 10582 / VPI-5482 / E50)</name>
    <dbReference type="NCBI Taxonomy" id="226186"/>
    <lineage>
        <taxon>Bacteria</taxon>
        <taxon>Pseudomonadati</taxon>
        <taxon>Bacteroidota</taxon>
        <taxon>Bacteroidia</taxon>
        <taxon>Bacteroidales</taxon>
        <taxon>Bacteroidaceae</taxon>
        <taxon>Bacteroides</taxon>
    </lineage>
</organism>
<feature type="chain" id="PRO_0000110596" description="Glutaminase">
    <location>
        <begin position="1"/>
        <end position="321"/>
    </location>
</feature>
<feature type="binding site" evidence="1">
    <location>
        <position position="69"/>
    </location>
    <ligand>
        <name>substrate</name>
    </ligand>
</feature>
<feature type="binding site" evidence="1">
    <location>
        <position position="120"/>
    </location>
    <ligand>
        <name>substrate</name>
    </ligand>
</feature>
<feature type="binding site" evidence="1">
    <location>
        <position position="165"/>
    </location>
    <ligand>
        <name>substrate</name>
    </ligand>
</feature>
<feature type="binding site" evidence="1">
    <location>
        <position position="172"/>
    </location>
    <ligand>
        <name>substrate</name>
    </ligand>
</feature>
<feature type="binding site" evidence="1">
    <location>
        <position position="196"/>
    </location>
    <ligand>
        <name>substrate</name>
    </ligand>
</feature>
<feature type="binding site" evidence="1">
    <location>
        <position position="248"/>
    </location>
    <ligand>
        <name>substrate</name>
    </ligand>
</feature>
<feature type="binding site" evidence="1">
    <location>
        <position position="266"/>
    </location>
    <ligand>
        <name>substrate</name>
    </ligand>
</feature>
<keyword id="KW-0378">Hydrolase</keyword>
<keyword id="KW-1185">Reference proteome</keyword>
<reference key="1">
    <citation type="journal article" date="2003" name="Science">
        <title>A genomic view of the human-Bacteroides thetaiotaomicron symbiosis.</title>
        <authorList>
            <person name="Xu J."/>
            <person name="Bjursell M.K."/>
            <person name="Himrod J."/>
            <person name="Deng S."/>
            <person name="Carmichael L.K."/>
            <person name="Chiang H.C."/>
            <person name="Hooper L.V."/>
            <person name="Gordon J.I."/>
        </authorList>
    </citation>
    <scope>NUCLEOTIDE SEQUENCE [LARGE SCALE GENOMIC DNA]</scope>
    <source>
        <strain>ATCC 29148 / DSM 2079 / JCM 5827 / CCUG 10774 / NCTC 10582 / VPI-5482 / E50</strain>
    </source>
</reference>
<name>GLSA_BACTN</name>